<feature type="chain" id="PRO_0000080731" description="Beta-2-microglobulin">
    <location>
        <begin position="1"/>
        <end position="42" status="greater than"/>
    </location>
</feature>
<feature type="domain" description="Ig-like C1-type" evidence="2">
    <location>
        <begin position="5"/>
        <end position="42" status="greater than"/>
    </location>
</feature>
<feature type="non-terminal residue">
    <location>
        <position position="42"/>
    </location>
</feature>
<keyword id="KW-0903">Direct protein sequencing</keyword>
<keyword id="KW-0391">Immunity</keyword>
<keyword id="KW-0393">Immunoglobulin domain</keyword>
<keyword id="KW-0490">MHC I</keyword>
<keyword id="KW-1185">Reference proteome</keyword>
<keyword id="KW-0964">Secreted</keyword>
<reference key="1">
    <citation type="journal article" date="1972" name="Proc. Natl. Acad. Sci. U.S.A.">
        <title>Dog homologue of human beta 2-microglobulin.</title>
        <authorList>
            <person name="Smithies O."/>
            <person name="Poulik M.D."/>
        </authorList>
    </citation>
    <scope>PROTEIN SEQUENCE</scope>
</reference>
<sequence length="42" mass="4842">VQHPPKIQVYSRHPAZBGKPBFLBCYVSGFHPXZIZIBLLKB</sequence>
<evidence type="ECO:0000250" key="1"/>
<evidence type="ECO:0000255" key="2">
    <source>
        <dbReference type="PROSITE-ProRule" id="PRU00114"/>
    </source>
</evidence>
<organism>
    <name type="scientific">Canis lupus familiaris</name>
    <name type="common">Dog</name>
    <name type="synonym">Canis familiaris</name>
    <dbReference type="NCBI Taxonomy" id="9615"/>
    <lineage>
        <taxon>Eukaryota</taxon>
        <taxon>Metazoa</taxon>
        <taxon>Chordata</taxon>
        <taxon>Craniata</taxon>
        <taxon>Vertebrata</taxon>
        <taxon>Euteleostomi</taxon>
        <taxon>Mammalia</taxon>
        <taxon>Eutheria</taxon>
        <taxon>Laurasiatheria</taxon>
        <taxon>Carnivora</taxon>
        <taxon>Caniformia</taxon>
        <taxon>Canidae</taxon>
        <taxon>Canis</taxon>
    </lineage>
</organism>
<protein>
    <recommendedName>
        <fullName>Beta-2-microglobulin</fullName>
    </recommendedName>
</protein>
<accession>P19341</accession>
<dbReference type="PIR" id="A29579">
    <property type="entry name" value="A29579"/>
</dbReference>
<dbReference type="FunCoup" id="P19341">
    <property type="interactions" value="201"/>
</dbReference>
<dbReference type="STRING" id="9615.ENSCAFP00000047956"/>
<dbReference type="InParanoid" id="P19341"/>
<dbReference type="OrthoDB" id="9949628at2759"/>
<dbReference type="Proteomes" id="UP000002254">
    <property type="component" value="Unplaced"/>
</dbReference>
<dbReference type="Proteomes" id="UP000694429">
    <property type="component" value="Unplaced"/>
</dbReference>
<dbReference type="Proteomes" id="UP000694542">
    <property type="component" value="Unplaced"/>
</dbReference>
<dbReference type="Proteomes" id="UP000805418">
    <property type="component" value="Unplaced"/>
</dbReference>
<dbReference type="GO" id="GO:0005576">
    <property type="term" value="C:extracellular region"/>
    <property type="evidence" value="ECO:0007669"/>
    <property type="project" value="UniProtKB-SubCell"/>
</dbReference>
<dbReference type="GO" id="GO:0042612">
    <property type="term" value="C:MHC class I protein complex"/>
    <property type="evidence" value="ECO:0007669"/>
    <property type="project" value="UniProtKB-KW"/>
</dbReference>
<dbReference type="GO" id="GO:0002474">
    <property type="term" value="P:antigen processing and presentation of peptide antigen via MHC class I"/>
    <property type="evidence" value="ECO:0007669"/>
    <property type="project" value="UniProtKB-KW"/>
</dbReference>
<dbReference type="Gene3D" id="2.60.40.10">
    <property type="entry name" value="Immunoglobulins"/>
    <property type="match status" value="1"/>
</dbReference>
<dbReference type="InterPro" id="IPR036179">
    <property type="entry name" value="Ig-like_dom_sf"/>
</dbReference>
<dbReference type="InterPro" id="IPR013783">
    <property type="entry name" value="Ig-like_fold"/>
</dbReference>
<dbReference type="InterPro" id="IPR003597">
    <property type="entry name" value="Ig_C1-set"/>
</dbReference>
<dbReference type="Pfam" id="PF07654">
    <property type="entry name" value="C1-set"/>
    <property type="match status" value="1"/>
</dbReference>
<dbReference type="SUPFAM" id="SSF48726">
    <property type="entry name" value="Immunoglobulin"/>
    <property type="match status" value="1"/>
</dbReference>
<proteinExistence type="evidence at protein level"/>
<comment type="function">
    <text evidence="1">Component of the class I major histocompatibility complex (MHC). Involved in the presentation of peptide antigens to the immune system (By similarity).</text>
</comment>
<comment type="subunit">
    <text evidence="1">Heterodimer of an alpha chain and a beta chain. Beta-2-microglobulin is the beta-chain of major histocompatibility complex class I molecules (By similarity).</text>
</comment>
<comment type="subcellular location">
    <subcellularLocation>
        <location evidence="1">Secreted</location>
    </subcellularLocation>
</comment>
<name>B2MG_CANLF</name>
<gene>
    <name type="primary">B2M</name>
</gene>